<feature type="chain" id="PRO_0000456552" description="Small ribosomal subunit protein uS11">
    <location>
        <begin position="1"/>
        <end position="132"/>
    </location>
</feature>
<feature type="region of interest" description="Disordered" evidence="2">
    <location>
        <begin position="110"/>
        <end position="132"/>
    </location>
</feature>
<feature type="compositionally biased region" description="Basic residues" evidence="2">
    <location>
        <begin position="123"/>
        <end position="132"/>
    </location>
</feature>
<keyword id="KW-0002">3D-structure</keyword>
<keyword id="KW-0963">Cytoplasm</keyword>
<keyword id="KW-1185">Reference proteome</keyword>
<keyword id="KW-0687">Ribonucleoprotein</keyword>
<keyword id="KW-0689">Ribosomal protein</keyword>
<comment type="function">
    <text evidence="1 6">Component of the ribosome, a large ribonucleoprotein complex responsible for the synthesis of proteins in the cell. The small ribosomal subunit (SSU) binds messenger RNAs (mRNAs) and translates the encoded message by selecting cognate aminoacyl-transfer RNA (tRNA) molecules. The large subunit (LSU) contains the ribosomal catalytic site termed the peptidyl transferase center (PTC), which catalyzes the formation of peptide bonds, thereby polymerizing the amino acids delivered by tRNAs into a polypeptide chain. The nascent polypeptides leave the ribosome through a tunnel in the LSU and interact with protein factors that function in enzymatic processing, targeting, and the membrane insertion of nascent chains at the exit of the ribosomal tunnel (Probable). RPS14B is involved in nucleolar processing of pre-18S ribosomal RNA and ribosome assembly (By similarity).</text>
</comment>
<comment type="subunit">
    <text evidence="3">Component of the small ribosomal subunit (PubMed:35613268). Mature ribosomes consist of a small (40S) and a large (60S) subunit (PubMed:35613268). The 40S subunit contains about 32 different proteins and 1 molecule of RNA (18S) (PubMed:35613268). The 60S subunit contains 45 different proteins and 3 molecules of RNA (25S, 5.8S and 5S) (PubMed:35613268).</text>
</comment>
<comment type="subcellular location">
    <subcellularLocation>
        <location evidence="6">Cytoplasm</location>
    </subcellularLocation>
</comment>
<comment type="similarity">
    <text evidence="5">Belongs to the universal ribosomal protein uS11 family.</text>
</comment>
<dbReference type="EMBL" id="CP017623">
    <property type="protein sequence ID" value="AOW26302.1"/>
    <property type="molecule type" value="Genomic_DNA"/>
</dbReference>
<dbReference type="RefSeq" id="XP_019330658.1">
    <property type="nucleotide sequence ID" value="XM_019475113.1"/>
</dbReference>
<dbReference type="PDB" id="7PZY">
    <property type="method" value="EM"/>
    <property type="resolution" value="2.32 A"/>
    <property type="chains" value="P=1-132"/>
</dbReference>
<dbReference type="PDB" id="7Q08">
    <property type="method" value="EM"/>
    <property type="resolution" value="2.56 A"/>
    <property type="chains" value="P=1-132"/>
</dbReference>
<dbReference type="PDB" id="7Q0F">
    <property type="method" value="EM"/>
    <property type="resolution" value="2.64 A"/>
    <property type="chains" value="P=1-132"/>
</dbReference>
<dbReference type="PDB" id="7Q0P">
    <property type="method" value="EM"/>
    <property type="resolution" value="2.77 A"/>
    <property type="chains" value="P=1-132"/>
</dbReference>
<dbReference type="PDB" id="7Q0R">
    <property type="method" value="EM"/>
    <property type="resolution" value="2.67 A"/>
    <property type="chains" value="P=1-132"/>
</dbReference>
<dbReference type="PDB" id="8C3A">
    <property type="method" value="X-ray"/>
    <property type="resolution" value="3.00 A"/>
    <property type="chains" value="DB/Q=1-132"/>
</dbReference>
<dbReference type="PDB" id="8OGJ">
    <property type="method" value="EM"/>
    <property type="resolution" value="3.10 A"/>
    <property type="chains" value="P=1-132"/>
</dbReference>
<dbReference type="PDB" id="8OH6">
    <property type="method" value="X-ray"/>
    <property type="resolution" value="3.35 A"/>
    <property type="chains" value="DB/Q=1-132"/>
</dbReference>
<dbReference type="PDB" id="8OI5">
    <property type="method" value="X-ray"/>
    <property type="resolution" value="2.90 A"/>
    <property type="chains" value="DB/Q=1-132"/>
</dbReference>
<dbReference type="PDB" id="8OJ3">
    <property type="method" value="X-ray"/>
    <property type="resolution" value="3.50 A"/>
    <property type="chains" value="DB/Q=1-132"/>
</dbReference>
<dbReference type="PDBsum" id="7PZY"/>
<dbReference type="PDBsum" id="7Q08"/>
<dbReference type="PDBsum" id="7Q0F"/>
<dbReference type="PDBsum" id="7Q0P"/>
<dbReference type="PDBsum" id="7Q0R"/>
<dbReference type="PDBsum" id="8C3A"/>
<dbReference type="PDBsum" id="8OGJ"/>
<dbReference type="PDBsum" id="8OH6"/>
<dbReference type="PDBsum" id="8OI5"/>
<dbReference type="PDBsum" id="8OJ3"/>
<dbReference type="EMDB" id="EMD-13737"/>
<dbReference type="EMDB" id="EMD-13741"/>
<dbReference type="EMDB" id="EMD-13744"/>
<dbReference type="EMDB" id="EMD-13749"/>
<dbReference type="EMDB" id="EMD-13750"/>
<dbReference type="SMR" id="A0A1D8PDT3"/>
<dbReference type="FunCoup" id="A0A1D8PDT3">
    <property type="interactions" value="1151"/>
</dbReference>
<dbReference type="STRING" id="237561.A0A1D8PDT3"/>
<dbReference type="EnsemblFungi" id="C1_06450C_A-T">
    <property type="protein sequence ID" value="C1_06450C_A-T-p1"/>
    <property type="gene ID" value="C1_06450C_A"/>
</dbReference>
<dbReference type="GeneID" id="30515006"/>
<dbReference type="KEGG" id="cal:CAALFM_C106450CA"/>
<dbReference type="CGD" id="CAL0000196584">
    <property type="gene designation" value="RPS14B"/>
</dbReference>
<dbReference type="VEuPathDB" id="FungiDB:C1_06450C_A"/>
<dbReference type="eggNOG" id="KOG0407">
    <property type="taxonomic scope" value="Eukaryota"/>
</dbReference>
<dbReference type="InParanoid" id="A0A1D8PDT3"/>
<dbReference type="OMA" id="IYASHND"/>
<dbReference type="OrthoDB" id="1677536at2759"/>
<dbReference type="Proteomes" id="UP000000559">
    <property type="component" value="Chromosome 1"/>
</dbReference>
<dbReference type="GO" id="GO:0022627">
    <property type="term" value="C:cytosolic small ribosomal subunit"/>
    <property type="evidence" value="ECO:0000318"/>
    <property type="project" value="GO_Central"/>
</dbReference>
<dbReference type="GO" id="GO:0030446">
    <property type="term" value="C:hyphal cell wall"/>
    <property type="evidence" value="ECO:0000314"/>
    <property type="project" value="CGD"/>
</dbReference>
<dbReference type="GO" id="GO:0030445">
    <property type="term" value="C:yeast-form cell wall"/>
    <property type="evidence" value="ECO:0000314"/>
    <property type="project" value="CGD"/>
</dbReference>
<dbReference type="GO" id="GO:0003735">
    <property type="term" value="F:structural constituent of ribosome"/>
    <property type="evidence" value="ECO:0000318"/>
    <property type="project" value="GO_Central"/>
</dbReference>
<dbReference type="GO" id="GO:0000028">
    <property type="term" value="P:ribosomal small subunit assembly"/>
    <property type="evidence" value="ECO:0000318"/>
    <property type="project" value="GO_Central"/>
</dbReference>
<dbReference type="GO" id="GO:0006412">
    <property type="term" value="P:translation"/>
    <property type="evidence" value="ECO:0000318"/>
    <property type="project" value="GO_Central"/>
</dbReference>
<dbReference type="FunFam" id="3.30.420.80:FF:000002">
    <property type="entry name" value="40S ribosomal protein S14"/>
    <property type="match status" value="1"/>
</dbReference>
<dbReference type="Gene3D" id="3.30.420.80">
    <property type="entry name" value="Ribosomal protein S11"/>
    <property type="match status" value="1"/>
</dbReference>
<dbReference type="HAMAP" id="MF_01310">
    <property type="entry name" value="Ribosomal_uS11"/>
    <property type="match status" value="1"/>
</dbReference>
<dbReference type="InterPro" id="IPR001971">
    <property type="entry name" value="Ribosomal_uS11"/>
</dbReference>
<dbReference type="InterPro" id="IPR018102">
    <property type="entry name" value="Ribosomal_uS11_CS"/>
</dbReference>
<dbReference type="InterPro" id="IPR036967">
    <property type="entry name" value="Ribosomal_uS11_sf"/>
</dbReference>
<dbReference type="NCBIfam" id="NF007176">
    <property type="entry name" value="PRK09607.1"/>
    <property type="match status" value="1"/>
</dbReference>
<dbReference type="PANTHER" id="PTHR11759">
    <property type="entry name" value="40S RIBOSOMAL PROTEIN S14/30S RIBOSOMAL PROTEIN S11"/>
    <property type="match status" value="1"/>
</dbReference>
<dbReference type="Pfam" id="PF00411">
    <property type="entry name" value="Ribosomal_S11"/>
    <property type="match status" value="1"/>
</dbReference>
<dbReference type="PIRSF" id="PIRSF002131">
    <property type="entry name" value="Ribosomal_S11"/>
    <property type="match status" value="1"/>
</dbReference>
<dbReference type="SUPFAM" id="SSF53137">
    <property type="entry name" value="Translational machinery components"/>
    <property type="match status" value="1"/>
</dbReference>
<dbReference type="PROSITE" id="PS00054">
    <property type="entry name" value="RIBOSOMAL_S11"/>
    <property type="match status" value="1"/>
</dbReference>
<sequence length="132" mass="14026">MSTDRSQVFGVARIFASFNDTFVHVTDLSGKETIARVTGGMKVKADRDESSPYAAMLAAQDVAAKCKEVGITAVHIKLRATGGTKTKTPGPGGQSALRALARSGLRIGRIEDVTPVPSDSTRRKGGRRGRRL</sequence>
<proteinExistence type="evidence at protein level"/>
<protein>
    <recommendedName>
        <fullName evidence="4">Small ribosomal subunit protein uS11</fullName>
    </recommendedName>
    <alternativeName>
        <fullName>40S ribosomal protein S14B</fullName>
    </alternativeName>
</protein>
<name>RS14B_CANAL</name>
<evidence type="ECO:0000250" key="1">
    <source>
        <dbReference type="UniProtKB" id="P06367"/>
    </source>
</evidence>
<evidence type="ECO:0000256" key="2">
    <source>
        <dbReference type="SAM" id="MobiDB-lite"/>
    </source>
</evidence>
<evidence type="ECO:0000269" key="3">
    <source>
    </source>
</evidence>
<evidence type="ECO:0000303" key="4">
    <source>
    </source>
</evidence>
<evidence type="ECO:0000305" key="5"/>
<evidence type="ECO:0000305" key="6">
    <source>
    </source>
</evidence>
<evidence type="ECO:0007744" key="7">
    <source>
        <dbReference type="PDB" id="7PZY"/>
    </source>
</evidence>
<evidence type="ECO:0007744" key="8">
    <source>
        <dbReference type="PDB" id="7Q0F"/>
    </source>
</evidence>
<evidence type="ECO:0007744" key="9">
    <source>
        <dbReference type="PDB" id="7Q0P"/>
    </source>
</evidence>
<gene>
    <name type="primary">RPS14B</name>
    <name type="ordered locus">orf19.6265.1</name>
    <name type="ORF">CAALFM_C106450CA</name>
</gene>
<organism>
    <name type="scientific">Candida albicans (strain SC5314 / ATCC MYA-2876)</name>
    <name type="common">Yeast</name>
    <dbReference type="NCBI Taxonomy" id="237561"/>
    <lineage>
        <taxon>Eukaryota</taxon>
        <taxon>Fungi</taxon>
        <taxon>Dikarya</taxon>
        <taxon>Ascomycota</taxon>
        <taxon>Saccharomycotina</taxon>
        <taxon>Pichiomycetes</taxon>
        <taxon>Debaryomycetaceae</taxon>
        <taxon>Candida/Lodderomyces clade</taxon>
        <taxon>Candida</taxon>
    </lineage>
</organism>
<accession>A0A1D8PDT3</accession>
<reference key="1">
    <citation type="journal article" date="2004" name="Proc. Natl. Acad. Sci. U.S.A.">
        <title>The diploid genome sequence of Candida albicans.</title>
        <authorList>
            <person name="Jones T."/>
            <person name="Federspiel N.A."/>
            <person name="Chibana H."/>
            <person name="Dungan J."/>
            <person name="Kalman S."/>
            <person name="Magee B.B."/>
            <person name="Newport G."/>
            <person name="Thorstenson Y.R."/>
            <person name="Agabian N."/>
            <person name="Magee P.T."/>
            <person name="Davis R.W."/>
            <person name="Scherer S."/>
        </authorList>
    </citation>
    <scope>NUCLEOTIDE SEQUENCE [LARGE SCALE GENOMIC DNA]</scope>
    <source>
        <strain>SC5314 / ATCC MYA-2876</strain>
    </source>
</reference>
<reference key="2">
    <citation type="journal article" date="2007" name="Genome Biol.">
        <title>Assembly of the Candida albicans genome into sixteen supercontigs aligned on the eight chromosomes.</title>
        <authorList>
            <person name="van het Hoog M."/>
            <person name="Rast T.J."/>
            <person name="Martchenko M."/>
            <person name="Grindle S."/>
            <person name="Dignard D."/>
            <person name="Hogues H."/>
            <person name="Cuomo C."/>
            <person name="Berriman M."/>
            <person name="Scherer S."/>
            <person name="Magee B.B."/>
            <person name="Whiteway M."/>
            <person name="Chibana H."/>
            <person name="Nantel A."/>
            <person name="Magee P.T."/>
        </authorList>
    </citation>
    <scope>GENOME REANNOTATION</scope>
    <source>
        <strain>SC5314 / ATCC MYA-2876</strain>
    </source>
</reference>
<reference key="3">
    <citation type="journal article" date="2013" name="Genome Biol.">
        <title>Assembly of a phased diploid Candida albicans genome facilitates allele-specific measurements and provides a simple model for repeat and indel structure.</title>
        <authorList>
            <person name="Muzzey D."/>
            <person name="Schwartz K."/>
            <person name="Weissman J.S."/>
            <person name="Sherlock G."/>
        </authorList>
    </citation>
    <scope>NUCLEOTIDE SEQUENCE [LARGE SCALE GENOMIC DNA]</scope>
    <scope>GENOME REANNOTATION</scope>
    <source>
        <strain>SC5314 / ATCC MYA-2876</strain>
    </source>
</reference>
<reference evidence="7 8 9" key="4">
    <citation type="journal article" date="2022" name="Sci. Adv.">
        <title>E-site drug specificity of the human pathogen Candida albicans ribosome.</title>
        <authorList>
            <person name="Zgadzay Y."/>
            <person name="Kolosova O."/>
            <person name="Stetsenko A."/>
            <person name="Wu C."/>
            <person name="Bruchlen D."/>
            <person name="Usachev K."/>
            <person name="Validov S."/>
            <person name="Jenner L."/>
            <person name="Rogachev A."/>
            <person name="Yusupova G."/>
            <person name="Sachs M.S."/>
            <person name="Guskov A."/>
            <person name="Yusupov M."/>
        </authorList>
    </citation>
    <scope>STRUCTURE BY ELECTRON MICROSCOPY (2.32 ANGSTROMS) OF THE 80S RIBOSOME</scope>
    <scope>SUBUNIT</scope>
</reference>